<gene>
    <name evidence="1" type="primary">rpsN</name>
    <name type="ordered locus">Ctha_1101</name>
</gene>
<accession>B3QYD7</accession>
<sequence length="89" mass="10381">MAKKCVVVRNEKRKQIVEKYASKREELKKQGDYEALRKLPRDSSPTRLKNRCSITGRAKGVYKKFGLCRHILRKYALEGKIPGMKKASW</sequence>
<reference key="1">
    <citation type="submission" date="2008-06" db="EMBL/GenBank/DDBJ databases">
        <title>Complete sequence of Chloroherpeton thalassium ATCC 35110.</title>
        <authorList>
            <consortium name="US DOE Joint Genome Institute"/>
            <person name="Lucas S."/>
            <person name="Copeland A."/>
            <person name="Lapidus A."/>
            <person name="Glavina del Rio T."/>
            <person name="Dalin E."/>
            <person name="Tice H."/>
            <person name="Bruce D."/>
            <person name="Goodwin L."/>
            <person name="Pitluck S."/>
            <person name="Schmutz J."/>
            <person name="Larimer F."/>
            <person name="Land M."/>
            <person name="Hauser L."/>
            <person name="Kyrpides N."/>
            <person name="Mikhailova N."/>
            <person name="Liu Z."/>
            <person name="Li T."/>
            <person name="Zhao F."/>
            <person name="Overmann J."/>
            <person name="Bryant D.A."/>
            <person name="Richardson P."/>
        </authorList>
    </citation>
    <scope>NUCLEOTIDE SEQUENCE [LARGE SCALE GENOMIC DNA]</scope>
    <source>
        <strain>ATCC 35110 / GB-78</strain>
    </source>
</reference>
<evidence type="ECO:0000255" key="1">
    <source>
        <dbReference type="HAMAP-Rule" id="MF_00537"/>
    </source>
</evidence>
<evidence type="ECO:0000305" key="2"/>
<dbReference type="EMBL" id="CP001100">
    <property type="protein sequence ID" value="ACF13565.1"/>
    <property type="molecule type" value="Genomic_DNA"/>
</dbReference>
<dbReference type="RefSeq" id="WP_012499649.1">
    <property type="nucleotide sequence ID" value="NC_011026.1"/>
</dbReference>
<dbReference type="SMR" id="B3QYD7"/>
<dbReference type="STRING" id="517418.Ctha_1101"/>
<dbReference type="KEGG" id="cts:Ctha_1101"/>
<dbReference type="eggNOG" id="COG0199">
    <property type="taxonomic scope" value="Bacteria"/>
</dbReference>
<dbReference type="HOGENOM" id="CLU_139869_0_0_10"/>
<dbReference type="OrthoDB" id="9810484at2"/>
<dbReference type="Proteomes" id="UP000001208">
    <property type="component" value="Chromosome"/>
</dbReference>
<dbReference type="GO" id="GO:0005737">
    <property type="term" value="C:cytoplasm"/>
    <property type="evidence" value="ECO:0007669"/>
    <property type="project" value="UniProtKB-ARBA"/>
</dbReference>
<dbReference type="GO" id="GO:0015935">
    <property type="term" value="C:small ribosomal subunit"/>
    <property type="evidence" value="ECO:0007669"/>
    <property type="project" value="TreeGrafter"/>
</dbReference>
<dbReference type="GO" id="GO:0019843">
    <property type="term" value="F:rRNA binding"/>
    <property type="evidence" value="ECO:0007669"/>
    <property type="project" value="UniProtKB-UniRule"/>
</dbReference>
<dbReference type="GO" id="GO:0003735">
    <property type="term" value="F:structural constituent of ribosome"/>
    <property type="evidence" value="ECO:0007669"/>
    <property type="project" value="InterPro"/>
</dbReference>
<dbReference type="GO" id="GO:0006412">
    <property type="term" value="P:translation"/>
    <property type="evidence" value="ECO:0007669"/>
    <property type="project" value="UniProtKB-UniRule"/>
</dbReference>
<dbReference type="Gene3D" id="4.10.830.10">
    <property type="entry name" value="30s Ribosomal Protein S14, Chain N"/>
    <property type="match status" value="1"/>
</dbReference>
<dbReference type="HAMAP" id="MF_00537">
    <property type="entry name" value="Ribosomal_uS14_1"/>
    <property type="match status" value="1"/>
</dbReference>
<dbReference type="InterPro" id="IPR001209">
    <property type="entry name" value="Ribosomal_uS14"/>
</dbReference>
<dbReference type="InterPro" id="IPR023036">
    <property type="entry name" value="Ribosomal_uS14_bac/plastid"/>
</dbReference>
<dbReference type="InterPro" id="IPR018271">
    <property type="entry name" value="Ribosomal_uS14_CS"/>
</dbReference>
<dbReference type="InterPro" id="IPR043140">
    <property type="entry name" value="Ribosomal_uS14_sf"/>
</dbReference>
<dbReference type="NCBIfam" id="NF006477">
    <property type="entry name" value="PRK08881.1"/>
    <property type="match status" value="1"/>
</dbReference>
<dbReference type="PANTHER" id="PTHR19836">
    <property type="entry name" value="30S RIBOSOMAL PROTEIN S14"/>
    <property type="match status" value="1"/>
</dbReference>
<dbReference type="PANTHER" id="PTHR19836:SF19">
    <property type="entry name" value="SMALL RIBOSOMAL SUBUNIT PROTEIN US14M"/>
    <property type="match status" value="1"/>
</dbReference>
<dbReference type="Pfam" id="PF00253">
    <property type="entry name" value="Ribosomal_S14"/>
    <property type="match status" value="1"/>
</dbReference>
<dbReference type="SUPFAM" id="SSF57716">
    <property type="entry name" value="Glucocorticoid receptor-like (DNA-binding domain)"/>
    <property type="match status" value="1"/>
</dbReference>
<dbReference type="PROSITE" id="PS00527">
    <property type="entry name" value="RIBOSOMAL_S14"/>
    <property type="match status" value="1"/>
</dbReference>
<organism>
    <name type="scientific">Chloroherpeton thalassium (strain ATCC 35110 / GB-78)</name>
    <dbReference type="NCBI Taxonomy" id="517418"/>
    <lineage>
        <taxon>Bacteria</taxon>
        <taxon>Pseudomonadati</taxon>
        <taxon>Chlorobiota</taxon>
        <taxon>Chlorobiia</taxon>
        <taxon>Chlorobiales</taxon>
        <taxon>Chloroherpetonaceae</taxon>
        <taxon>Chloroherpeton</taxon>
    </lineage>
</organism>
<comment type="function">
    <text evidence="1">Binds 16S rRNA, required for the assembly of 30S particles and may also be responsible for determining the conformation of the 16S rRNA at the A site.</text>
</comment>
<comment type="subunit">
    <text evidence="1">Part of the 30S ribosomal subunit. Contacts proteins S3 and S10.</text>
</comment>
<comment type="similarity">
    <text evidence="1">Belongs to the universal ribosomal protein uS14 family.</text>
</comment>
<protein>
    <recommendedName>
        <fullName evidence="1">Small ribosomal subunit protein uS14</fullName>
    </recommendedName>
    <alternativeName>
        <fullName evidence="2">30S ribosomal protein S14</fullName>
    </alternativeName>
</protein>
<name>RS14_CHLT3</name>
<proteinExistence type="inferred from homology"/>
<keyword id="KW-1185">Reference proteome</keyword>
<keyword id="KW-0687">Ribonucleoprotein</keyword>
<keyword id="KW-0689">Ribosomal protein</keyword>
<keyword id="KW-0694">RNA-binding</keyword>
<keyword id="KW-0699">rRNA-binding</keyword>
<feature type="chain" id="PRO_1000128358" description="Small ribosomal subunit protein uS14">
    <location>
        <begin position="1"/>
        <end position="89"/>
    </location>
</feature>